<proteinExistence type="inferred from homology"/>
<evidence type="ECO:0000255" key="1">
    <source>
        <dbReference type="HAMAP-Rule" id="MF_00387"/>
    </source>
</evidence>
<comment type="function">
    <text evidence="1">Involved in the biosynthesis of lipid A, a phosphorylated glycolipid that anchors the lipopolysaccharide to the outer membrane of the cell.</text>
</comment>
<comment type="catalytic activity">
    <reaction evidence="1">
        <text>a (3R)-hydroxyacyl-[ACP] + UDP-N-acetyl-alpha-D-glucosamine = a UDP-3-O-[(3R)-3-hydroxyacyl]-N-acetyl-alpha-D-glucosamine + holo-[ACP]</text>
        <dbReference type="Rhea" id="RHEA:67812"/>
        <dbReference type="Rhea" id="RHEA-COMP:9685"/>
        <dbReference type="Rhea" id="RHEA-COMP:9945"/>
        <dbReference type="ChEBI" id="CHEBI:57705"/>
        <dbReference type="ChEBI" id="CHEBI:64479"/>
        <dbReference type="ChEBI" id="CHEBI:78827"/>
        <dbReference type="ChEBI" id="CHEBI:173225"/>
        <dbReference type="EC" id="2.3.1.129"/>
    </reaction>
</comment>
<comment type="pathway">
    <text evidence="1">Glycolipid biosynthesis; lipid IV(A) biosynthesis; lipid IV(A) from (3R)-3-hydroxytetradecanoyl-[acyl-carrier-protein] and UDP-N-acetyl-alpha-D-glucosamine: step 1/6.</text>
</comment>
<comment type="subunit">
    <text evidence="1">Homotrimer.</text>
</comment>
<comment type="subcellular location">
    <subcellularLocation>
        <location evidence="1">Cytoplasm</location>
    </subcellularLocation>
</comment>
<comment type="similarity">
    <text evidence="1">Belongs to the transferase hexapeptide repeat family. LpxA subfamily.</text>
</comment>
<dbReference type="EC" id="2.3.1.129" evidence="1"/>
<dbReference type="EMBL" id="CP000050">
    <property type="protein sequence ID" value="AAY49925.1"/>
    <property type="molecule type" value="Genomic_DNA"/>
</dbReference>
<dbReference type="RefSeq" id="WP_011036553.1">
    <property type="nucleotide sequence ID" value="NZ_CP155948.1"/>
</dbReference>
<dbReference type="SMR" id="Q4USP8"/>
<dbReference type="GeneID" id="58014041"/>
<dbReference type="KEGG" id="xcb:XC_2877"/>
<dbReference type="HOGENOM" id="CLU_061249_0_0_6"/>
<dbReference type="UniPathway" id="UPA00359">
    <property type="reaction ID" value="UER00477"/>
</dbReference>
<dbReference type="Proteomes" id="UP000000420">
    <property type="component" value="Chromosome"/>
</dbReference>
<dbReference type="GO" id="GO:0005737">
    <property type="term" value="C:cytoplasm"/>
    <property type="evidence" value="ECO:0007669"/>
    <property type="project" value="UniProtKB-SubCell"/>
</dbReference>
<dbReference type="GO" id="GO:0016020">
    <property type="term" value="C:membrane"/>
    <property type="evidence" value="ECO:0007669"/>
    <property type="project" value="GOC"/>
</dbReference>
<dbReference type="GO" id="GO:0008780">
    <property type="term" value="F:acyl-[acyl-carrier-protein]-UDP-N-acetylglucosamine O-acyltransferase activity"/>
    <property type="evidence" value="ECO:0007669"/>
    <property type="project" value="UniProtKB-UniRule"/>
</dbReference>
<dbReference type="GO" id="GO:0009245">
    <property type="term" value="P:lipid A biosynthetic process"/>
    <property type="evidence" value="ECO:0007669"/>
    <property type="project" value="UniProtKB-UniRule"/>
</dbReference>
<dbReference type="CDD" id="cd03351">
    <property type="entry name" value="LbH_UDP-GlcNAc_AT"/>
    <property type="match status" value="1"/>
</dbReference>
<dbReference type="Gene3D" id="2.160.10.10">
    <property type="entry name" value="Hexapeptide repeat proteins"/>
    <property type="match status" value="1"/>
</dbReference>
<dbReference type="Gene3D" id="1.20.1180.10">
    <property type="entry name" value="Udp N-acetylglucosamine O-acyltransferase, C-terminal domain"/>
    <property type="match status" value="1"/>
</dbReference>
<dbReference type="HAMAP" id="MF_00387">
    <property type="entry name" value="LpxA"/>
    <property type="match status" value="1"/>
</dbReference>
<dbReference type="InterPro" id="IPR029098">
    <property type="entry name" value="Acetyltransf_C"/>
</dbReference>
<dbReference type="InterPro" id="IPR037157">
    <property type="entry name" value="Acetyltransf_C_sf"/>
</dbReference>
<dbReference type="InterPro" id="IPR001451">
    <property type="entry name" value="Hexapep"/>
</dbReference>
<dbReference type="InterPro" id="IPR010137">
    <property type="entry name" value="Lipid_A_LpxA"/>
</dbReference>
<dbReference type="InterPro" id="IPR011004">
    <property type="entry name" value="Trimer_LpxA-like_sf"/>
</dbReference>
<dbReference type="NCBIfam" id="TIGR01852">
    <property type="entry name" value="lipid_A_lpxA"/>
    <property type="match status" value="1"/>
</dbReference>
<dbReference type="NCBIfam" id="NF003657">
    <property type="entry name" value="PRK05289.1"/>
    <property type="match status" value="1"/>
</dbReference>
<dbReference type="PANTHER" id="PTHR43480">
    <property type="entry name" value="ACYL-[ACYL-CARRIER-PROTEIN]--UDP-N-ACETYLGLUCOSAMINE O-ACYLTRANSFERASE"/>
    <property type="match status" value="1"/>
</dbReference>
<dbReference type="PANTHER" id="PTHR43480:SF1">
    <property type="entry name" value="ACYL-[ACYL-CARRIER-PROTEIN]--UDP-N-ACETYLGLUCOSAMINE O-ACYLTRANSFERASE, MITOCHONDRIAL-RELATED"/>
    <property type="match status" value="1"/>
</dbReference>
<dbReference type="Pfam" id="PF13720">
    <property type="entry name" value="Acetyltransf_11"/>
    <property type="match status" value="1"/>
</dbReference>
<dbReference type="Pfam" id="PF00132">
    <property type="entry name" value="Hexapep"/>
    <property type="match status" value="1"/>
</dbReference>
<dbReference type="PIRSF" id="PIRSF000456">
    <property type="entry name" value="UDP-GlcNAc_acltr"/>
    <property type="match status" value="1"/>
</dbReference>
<dbReference type="SUPFAM" id="SSF51161">
    <property type="entry name" value="Trimeric LpxA-like enzymes"/>
    <property type="match status" value="1"/>
</dbReference>
<protein>
    <recommendedName>
        <fullName evidence="1">Acyl-[acyl-carrier-protein]--UDP-N-acetylglucosamine O-acyltransferase</fullName>
        <shortName evidence="1">UDP-N-acetylglucosamine acyltransferase</shortName>
        <ecNumber evidence="1">2.3.1.129</ecNumber>
    </recommendedName>
</protein>
<organism>
    <name type="scientific">Xanthomonas campestris pv. campestris (strain 8004)</name>
    <dbReference type="NCBI Taxonomy" id="314565"/>
    <lineage>
        <taxon>Bacteria</taxon>
        <taxon>Pseudomonadati</taxon>
        <taxon>Pseudomonadota</taxon>
        <taxon>Gammaproteobacteria</taxon>
        <taxon>Lysobacterales</taxon>
        <taxon>Lysobacteraceae</taxon>
        <taxon>Xanthomonas</taxon>
    </lineage>
</organism>
<name>LPXA_XANC8</name>
<keyword id="KW-0012">Acyltransferase</keyword>
<keyword id="KW-0963">Cytoplasm</keyword>
<keyword id="KW-0441">Lipid A biosynthesis</keyword>
<keyword id="KW-0444">Lipid biosynthesis</keyword>
<keyword id="KW-0443">Lipid metabolism</keyword>
<keyword id="KW-0677">Repeat</keyword>
<keyword id="KW-0808">Transferase</keyword>
<gene>
    <name evidence="1" type="primary">lpxA</name>
    <name type="ordered locus">XC_2877</name>
</gene>
<sequence length="263" mass="27842">MRDQAPLIHPTAVIDPAARLASDVRVGAFSLIGADVEIGAGTEVGPHCSIHGPTRIGSNNRFIGHAAIGGEPQDKKYAGERTELVIGNGNVIREFVTINRGTGGGGGITVVGDDNWMLAYTHVAHDCHVGNHCVFSNNTTLAGHVTVGDYVIISGFAGAHQFCRIGAHAFLGMGALTNGDVPPFTMVGSDSLGRPRGINSEGLKRRGFDAERISAIKRAYRTLYVAGLPLAEAKLQLAEQARDSDDVRGLLEFIEAAERPLLR</sequence>
<reference key="1">
    <citation type="journal article" date="2005" name="Genome Res.">
        <title>Comparative and functional genomic analyses of the pathogenicity of phytopathogen Xanthomonas campestris pv. campestris.</title>
        <authorList>
            <person name="Qian W."/>
            <person name="Jia Y."/>
            <person name="Ren S.-X."/>
            <person name="He Y.-Q."/>
            <person name="Feng J.-X."/>
            <person name="Lu L.-F."/>
            <person name="Sun Q."/>
            <person name="Ying G."/>
            <person name="Tang D.-J."/>
            <person name="Tang H."/>
            <person name="Wu W."/>
            <person name="Hao P."/>
            <person name="Wang L."/>
            <person name="Jiang B.-L."/>
            <person name="Zeng S."/>
            <person name="Gu W.-Y."/>
            <person name="Lu G."/>
            <person name="Rong L."/>
            <person name="Tian Y."/>
            <person name="Yao Z."/>
            <person name="Fu G."/>
            <person name="Chen B."/>
            <person name="Fang R."/>
            <person name="Qiang B."/>
            <person name="Chen Z."/>
            <person name="Zhao G.-P."/>
            <person name="Tang J.-L."/>
            <person name="He C."/>
        </authorList>
    </citation>
    <scope>NUCLEOTIDE SEQUENCE [LARGE SCALE GENOMIC DNA]</scope>
    <source>
        <strain>8004</strain>
    </source>
</reference>
<feature type="chain" id="PRO_0000302609" description="Acyl-[acyl-carrier-protein]--UDP-N-acetylglucosamine O-acyltransferase">
    <location>
        <begin position="1"/>
        <end position="263"/>
    </location>
</feature>
<accession>Q4USP8</accession>